<keyword id="KW-0687">Ribonucleoprotein</keyword>
<keyword id="KW-0689">Ribosomal protein</keyword>
<reference key="1">
    <citation type="submission" date="2006-06" db="EMBL/GenBank/DDBJ databases">
        <title>Complete sequence of Pseudoalteromonas atlantica T6c.</title>
        <authorList>
            <consortium name="US DOE Joint Genome Institute"/>
            <person name="Copeland A."/>
            <person name="Lucas S."/>
            <person name="Lapidus A."/>
            <person name="Barry K."/>
            <person name="Detter J.C."/>
            <person name="Glavina del Rio T."/>
            <person name="Hammon N."/>
            <person name="Israni S."/>
            <person name="Dalin E."/>
            <person name="Tice H."/>
            <person name="Pitluck S."/>
            <person name="Saunders E."/>
            <person name="Brettin T."/>
            <person name="Bruce D."/>
            <person name="Han C."/>
            <person name="Tapia R."/>
            <person name="Gilna P."/>
            <person name="Schmutz J."/>
            <person name="Larimer F."/>
            <person name="Land M."/>
            <person name="Hauser L."/>
            <person name="Kyrpides N."/>
            <person name="Kim E."/>
            <person name="Karls A.C."/>
            <person name="Bartlett D."/>
            <person name="Higgins B.P."/>
            <person name="Richardson P."/>
        </authorList>
    </citation>
    <scope>NUCLEOTIDE SEQUENCE [LARGE SCALE GENOMIC DNA]</scope>
    <source>
        <strain>T6c / ATCC BAA-1087</strain>
    </source>
</reference>
<name>RS21_PSEA6</name>
<protein>
    <recommendedName>
        <fullName evidence="1">Small ribosomal subunit protein bS21</fullName>
    </recommendedName>
    <alternativeName>
        <fullName evidence="2">30S ribosomal protein S21</fullName>
    </alternativeName>
</protein>
<feature type="chain" id="PRO_0000266733" description="Small ribosomal subunit protein bS21">
    <location>
        <begin position="1"/>
        <end position="71"/>
    </location>
</feature>
<accession>Q15X21</accession>
<comment type="similarity">
    <text evidence="1">Belongs to the bacterial ribosomal protein bS21 family.</text>
</comment>
<organism>
    <name type="scientific">Pseudoalteromonas atlantica (strain T6c / ATCC BAA-1087)</name>
    <dbReference type="NCBI Taxonomy" id="3042615"/>
    <lineage>
        <taxon>Bacteria</taxon>
        <taxon>Pseudomonadati</taxon>
        <taxon>Pseudomonadota</taxon>
        <taxon>Gammaproteobacteria</taxon>
        <taxon>Alteromonadales</taxon>
        <taxon>Alteromonadaceae</taxon>
        <taxon>Paraglaciecola</taxon>
    </lineage>
</organism>
<dbReference type="EMBL" id="CP000388">
    <property type="protein sequence ID" value="ABG39567.1"/>
    <property type="molecule type" value="Genomic_DNA"/>
</dbReference>
<dbReference type="RefSeq" id="WP_006991319.1">
    <property type="nucleotide sequence ID" value="NC_008228.1"/>
</dbReference>
<dbReference type="SMR" id="Q15X21"/>
<dbReference type="STRING" id="342610.Patl_1041"/>
<dbReference type="KEGG" id="pat:Patl_1041"/>
<dbReference type="eggNOG" id="COG0828">
    <property type="taxonomic scope" value="Bacteria"/>
</dbReference>
<dbReference type="HOGENOM" id="CLU_159258_1_0_6"/>
<dbReference type="OrthoDB" id="9799244at2"/>
<dbReference type="Proteomes" id="UP000001981">
    <property type="component" value="Chromosome"/>
</dbReference>
<dbReference type="GO" id="GO:1990904">
    <property type="term" value="C:ribonucleoprotein complex"/>
    <property type="evidence" value="ECO:0007669"/>
    <property type="project" value="UniProtKB-KW"/>
</dbReference>
<dbReference type="GO" id="GO:0005840">
    <property type="term" value="C:ribosome"/>
    <property type="evidence" value="ECO:0007669"/>
    <property type="project" value="UniProtKB-KW"/>
</dbReference>
<dbReference type="GO" id="GO:0003735">
    <property type="term" value="F:structural constituent of ribosome"/>
    <property type="evidence" value="ECO:0007669"/>
    <property type="project" value="InterPro"/>
</dbReference>
<dbReference type="GO" id="GO:0006412">
    <property type="term" value="P:translation"/>
    <property type="evidence" value="ECO:0007669"/>
    <property type="project" value="UniProtKB-UniRule"/>
</dbReference>
<dbReference type="Gene3D" id="1.20.5.1150">
    <property type="entry name" value="Ribosomal protein S8"/>
    <property type="match status" value="1"/>
</dbReference>
<dbReference type="HAMAP" id="MF_00358">
    <property type="entry name" value="Ribosomal_bS21"/>
    <property type="match status" value="1"/>
</dbReference>
<dbReference type="InterPro" id="IPR001911">
    <property type="entry name" value="Ribosomal_bS21"/>
</dbReference>
<dbReference type="InterPro" id="IPR018278">
    <property type="entry name" value="Ribosomal_bS21_CS"/>
</dbReference>
<dbReference type="InterPro" id="IPR038380">
    <property type="entry name" value="Ribosomal_bS21_sf"/>
</dbReference>
<dbReference type="NCBIfam" id="TIGR00030">
    <property type="entry name" value="S21p"/>
    <property type="match status" value="1"/>
</dbReference>
<dbReference type="PANTHER" id="PTHR21109">
    <property type="entry name" value="MITOCHONDRIAL 28S RIBOSOMAL PROTEIN S21"/>
    <property type="match status" value="1"/>
</dbReference>
<dbReference type="PANTHER" id="PTHR21109:SF22">
    <property type="entry name" value="SMALL RIBOSOMAL SUBUNIT PROTEIN BS21"/>
    <property type="match status" value="1"/>
</dbReference>
<dbReference type="Pfam" id="PF01165">
    <property type="entry name" value="Ribosomal_S21"/>
    <property type="match status" value="1"/>
</dbReference>
<dbReference type="PRINTS" id="PR00976">
    <property type="entry name" value="RIBOSOMALS21"/>
</dbReference>
<dbReference type="PROSITE" id="PS01181">
    <property type="entry name" value="RIBOSOMAL_S21"/>
    <property type="match status" value="1"/>
</dbReference>
<proteinExistence type="inferred from homology"/>
<evidence type="ECO:0000255" key="1">
    <source>
        <dbReference type="HAMAP-Rule" id="MF_00358"/>
    </source>
</evidence>
<evidence type="ECO:0000305" key="2"/>
<gene>
    <name evidence="1" type="primary">rpsU</name>
    <name type="ordered locus">Patl_1041</name>
</gene>
<sequence>MPIVKVRENEPFDVALRRFKRSCEKAGVLSEVRRREFFEKPTWERKRKKAAAKKRLLKKLSRENARRIRLY</sequence>